<keyword id="KW-0191">Covalent protein-RNA linkage</keyword>
<keyword id="KW-0903">Direct protein sequencing</keyword>
<keyword id="KW-1043">Host membrane</keyword>
<keyword id="KW-0378">Hydrolase</keyword>
<keyword id="KW-0472">Membrane</keyword>
<keyword id="KW-0597">Phosphoprotein</keyword>
<keyword id="KW-0645">Protease</keyword>
<keyword id="KW-0688">Ribosomal frameshifting</keyword>
<keyword id="KW-0720">Serine protease</keyword>
<keyword id="KW-0812">Transmembrane</keyword>
<keyword id="KW-1133">Transmembrane helix</keyword>
<keyword id="KW-0693">Viral RNA replication</keyword>
<accession>Q3ZN07</accession>
<name>NS1A_HASV4</name>
<dbReference type="EC" id="3.4.21.-" evidence="2"/>
<dbReference type="EMBL" id="AY720891">
    <property type="protein sequence ID" value="AAW51877.1"/>
    <property type="molecule type" value="Genomic_RNA"/>
</dbReference>
<dbReference type="SMR" id="Q3ZN07"/>
<dbReference type="Proteomes" id="UP000009176">
    <property type="component" value="Genome"/>
</dbReference>
<dbReference type="GO" id="GO:0033644">
    <property type="term" value="C:host cell membrane"/>
    <property type="evidence" value="ECO:0007669"/>
    <property type="project" value="UniProtKB-SubCell"/>
</dbReference>
<dbReference type="GO" id="GO:0016020">
    <property type="term" value="C:membrane"/>
    <property type="evidence" value="ECO:0007669"/>
    <property type="project" value="UniProtKB-KW"/>
</dbReference>
<dbReference type="GO" id="GO:0034062">
    <property type="term" value="F:5'-3' RNA polymerase activity"/>
    <property type="evidence" value="ECO:0007669"/>
    <property type="project" value="RHEA"/>
</dbReference>
<dbReference type="GO" id="GO:0004252">
    <property type="term" value="F:serine-type endopeptidase activity"/>
    <property type="evidence" value="ECO:0007669"/>
    <property type="project" value="InterPro"/>
</dbReference>
<dbReference type="GO" id="GO:0070008">
    <property type="term" value="F:serine-type exopeptidase activity"/>
    <property type="evidence" value="ECO:0007669"/>
    <property type="project" value="InterPro"/>
</dbReference>
<dbReference type="GO" id="GO:0006508">
    <property type="term" value="P:proteolysis"/>
    <property type="evidence" value="ECO:0007669"/>
    <property type="project" value="UniProtKB-KW"/>
</dbReference>
<dbReference type="GO" id="GO:0075523">
    <property type="term" value="P:viral translational frameshifting"/>
    <property type="evidence" value="ECO:0007669"/>
    <property type="project" value="UniProtKB-KW"/>
</dbReference>
<dbReference type="Gene3D" id="2.40.10.10">
    <property type="entry name" value="Trypsin-like serine proteases"/>
    <property type="match status" value="2"/>
</dbReference>
<dbReference type="InterPro" id="IPR045835">
    <property type="entry name" value="Astro_1A"/>
</dbReference>
<dbReference type="InterPro" id="IPR045833">
    <property type="entry name" value="Astro_p19"/>
</dbReference>
<dbReference type="InterPro" id="IPR045836">
    <property type="entry name" value="Astro_VPg"/>
</dbReference>
<dbReference type="InterPro" id="IPR022068">
    <property type="entry name" value="Mamastrovirus_p20"/>
</dbReference>
<dbReference type="InterPro" id="IPR009003">
    <property type="entry name" value="Peptidase_S1_PA"/>
</dbReference>
<dbReference type="InterPro" id="IPR043504">
    <property type="entry name" value="Peptidase_S1_PA_chymotrypsin"/>
</dbReference>
<dbReference type="Pfam" id="PF19415">
    <property type="entry name" value="Astro_1A"/>
    <property type="match status" value="1"/>
</dbReference>
<dbReference type="Pfam" id="PF19414">
    <property type="entry name" value="Astro_p19"/>
    <property type="match status" value="1"/>
</dbReference>
<dbReference type="Pfam" id="PF19416">
    <property type="entry name" value="Astro_VPg"/>
    <property type="match status" value="1"/>
</dbReference>
<dbReference type="Pfam" id="PF12285">
    <property type="entry name" value="Astrovir_pp_1"/>
    <property type="match status" value="1"/>
</dbReference>
<dbReference type="Pfam" id="PF13365">
    <property type="entry name" value="Trypsin_2"/>
    <property type="match status" value="1"/>
</dbReference>
<dbReference type="SUPFAM" id="SSF50494">
    <property type="entry name" value="Trypsin-like serine proteases"/>
    <property type="match status" value="1"/>
</dbReference>
<proteinExistence type="evidence at protein level"/>
<evidence type="ECO:0000250" key="1"/>
<evidence type="ECO:0000250" key="2">
    <source>
        <dbReference type="UniProtKB" id="P0C6K4"/>
    </source>
</evidence>
<evidence type="ECO:0000255" key="3"/>
<evidence type="ECO:0000256" key="4">
    <source>
        <dbReference type="SAM" id="MobiDB-lite"/>
    </source>
</evidence>
<evidence type="ECO:0000269" key="5">
    <source>
    </source>
</evidence>
<evidence type="ECO:0000305" key="6"/>
<evidence type="ECO:0000305" key="7">
    <source>
    </source>
</evidence>
<organism>
    <name type="scientific">Human astrovirus-4</name>
    <name type="common">HAstV-4</name>
    <dbReference type="NCBI Taxonomy" id="35300"/>
    <lineage>
        <taxon>Viruses</taxon>
        <taxon>Riboviria</taxon>
        <taxon>Orthornavirae</taxon>
        <taxon>Pisuviricota</taxon>
        <taxon>Stelpaviricetes</taxon>
        <taxon>Stellavirales</taxon>
        <taxon>Astroviridae</taxon>
        <taxon>Mamastrovirus</taxon>
        <taxon>Mamastrovirus 1</taxon>
    </lineage>
</organism>
<reference key="1">
    <citation type="submission" date="2004-08" db="EMBL/GenBank/DDBJ databases">
        <title>Molecular characterization of human astrovirus type 4.</title>
        <authorList>
            <person name="Barthel J."/>
            <person name="Rethwilm A."/>
            <person name="Rohayem J."/>
        </authorList>
    </citation>
    <scope>NUCLEOTIDE SEQUENCE [GENOMIC RNA]</scope>
    <source>
        <strain>Dresden</strain>
    </source>
</reference>
<reference key="2">
    <citation type="journal article" date="2012" name="J. Virol.">
        <title>Identification of human astrovirus genome-linked protein (VPg) essential for viral infectivity.</title>
        <authorList>
            <person name="Fuentes C."/>
            <person name="Bosch A."/>
            <person name="Pinto R.M."/>
            <person name="Guix S."/>
        </authorList>
    </citation>
    <scope>PROTEIN SEQUENCE OF 699-713</scope>
    <scope>IDENTIFICATION (VIRAL GENOME-LINKED PROTEIN)</scope>
    <scope>FUNCTION (VIRAL GENOME-LINKED PROTEIN)</scope>
    <scope>MUTAGENESIS OF TYR-693; TYR-720; TYR-723; TYR-728; TYR-729 AND TYR-747</scope>
    <scope>COVALENT RNA LINKAGE AT TYR-693</scope>
</reference>
<protein>
    <recommendedName>
        <fullName>Non-structural polyprotein 1A</fullName>
    </recommendedName>
    <component>
        <recommendedName>
            <fullName>Protein p19</fullName>
        </recommendedName>
    </component>
    <component>
        <recommendedName>
            <fullName>Transmembrane protein 1A</fullName>
        </recommendedName>
    </component>
    <component>
        <recommendedName>
            <fullName>Serine protease p27</fullName>
            <shortName>p27</shortName>
            <ecNumber evidence="2">3.4.21.-</ecNumber>
        </recommendedName>
    </component>
    <component>
        <recommendedName>
            <fullName>Viral genome-linked protein</fullName>
        </recommendedName>
        <alternativeName>
            <fullName>VPg</fullName>
        </alternativeName>
    </component>
    <component>
        <recommendedName>
            <fullName>Protein p20'</fullName>
        </recommendedName>
    </component>
</protein>
<sequence length="920" mass="103386">MAHGEPYYSSKPDKDFNFGSTMARRQMTPTMVAKLPNFVRNSPQAYDWIVRGLIFPTTGKTYFQRVVVITGGLEDGTYGSFVFDGREWVEIYPIEHLNLMSSLKLIHKANALQERLRLSQEEKATLALDVQFLQHENVRLKELIPKPEPRKIQMKWIIVGAVLTFLSLIPGGYAQSQINNTIFTDMIAACKYSTETLTENLDLRIKLALANITISDKLDAVRQILNFAFVPRAHWLRTVFYYIHYYEMWNIFMFVLAIGTVMRSARPGTDLITLATSHLSGFRMAVLPTIPFHTTMTLWVMNTLMVCYYFDNLLAITLAILAPILGIIFLCFMEDSNYVSQIRGLIATAVLIAGGHACLTLTGTTTSLFVVILTCRFIRMATVFIGTRFEIRDANGKVVATVPTRIKNVAFDFFQKLKQSGVRVGVNEFVVIKPGALCVIDTPEGKGTGFFSGNDIVTAAHAVGNNTFVNVCYEGLMYEAKVRYMPEKDIAFITCPGDLHPTARLKLSKNPDYSCVTVMAYVNEDLVVSTAAAMVHGNTLSYAVRTQDGMSGAPVCDKYGRVLAVHQTNTGYTGGAVIIDPTDFHPVKAPSRVELLKEEIERLKAQLNSAAENPATAVTQQPVVTLEQKSVSDSDVVDLVRTAMEREMKVLRDEINGILAPFLQKKKGKTKHGRGRVRRNLRKGVKLLTEEEYRELLEKGLDRETFLDLIDRIIGERSGYPDYDDEDYYDEDDDGWGVVGDDVEFDYTEVINFDQAKPTPAPRTVKPKTCPEPEAETQPLDLSQKKEKQLEHEQQVVKSTKPQKNEPQPYSQTYGKAPIWESYDFDWDEDDAKFILPAPHRLTKADEIVLGSKIVKLRTIIETAIKTQNYSALPEAVFELDKAAYEAGLEGFLQRVKSKNKAPKNYKGPQKTKGPKTITH</sequence>
<feature type="chain" id="PRO_0000327330" description="Non-structural polyprotein 1A">
    <location>
        <begin position="1"/>
        <end position="920"/>
    </location>
</feature>
<feature type="chain" id="PRO_0000327331" description="Protein p19" evidence="3">
    <location>
        <begin position="1"/>
        <end position="175"/>
    </location>
</feature>
<feature type="chain" id="PRO_0000327332" description="Transmembrane protein 1A" evidence="3">
    <location>
        <begin position="176"/>
        <end position="419"/>
    </location>
</feature>
<feature type="chain" id="PRO_0000327333" description="Serine protease p27" evidence="3">
    <location>
        <begin position="420"/>
        <end position="664"/>
    </location>
</feature>
<feature type="chain" id="PRO_0000419596" description="Viral genome-linked protein" evidence="3">
    <location>
        <begin position="665"/>
        <end position="755"/>
    </location>
</feature>
<feature type="chain" id="PRO_0000327334" description="Protein p20'" evidence="3">
    <location>
        <begin position="756"/>
        <end position="920"/>
    </location>
</feature>
<feature type="transmembrane region" description="Helical" evidence="3">
    <location>
        <begin position="239"/>
        <end position="259"/>
    </location>
</feature>
<feature type="transmembrane region" description="Helical" evidence="3">
    <location>
        <begin position="286"/>
        <end position="306"/>
    </location>
</feature>
<feature type="transmembrane region" description="Helical" evidence="3">
    <location>
        <begin position="313"/>
        <end position="333"/>
    </location>
</feature>
<feature type="transmembrane region" description="Helical" evidence="3">
    <location>
        <begin position="344"/>
        <end position="364"/>
    </location>
</feature>
<feature type="region of interest" description="Disordered" evidence="4">
    <location>
        <begin position="753"/>
        <end position="813"/>
    </location>
</feature>
<feature type="region of interest" description="Disordered" evidence="4">
    <location>
        <begin position="900"/>
        <end position="920"/>
    </location>
</feature>
<feature type="compositionally biased region" description="Basic and acidic residues" evidence="4">
    <location>
        <begin position="783"/>
        <end position="795"/>
    </location>
</feature>
<feature type="compositionally biased region" description="Polar residues" evidence="4">
    <location>
        <begin position="800"/>
        <end position="813"/>
    </location>
</feature>
<feature type="active site" description="Charge relay system; for serine protease activity" evidence="1">
    <location>
        <position position="461"/>
    </location>
</feature>
<feature type="active site" description="Charge relay system; for serine protease activity" evidence="1">
    <location>
        <position position="489"/>
    </location>
</feature>
<feature type="active site" description="Charge relay system; for serine protease activity" evidence="1">
    <location>
        <position position="551"/>
    </location>
</feature>
<feature type="site" description="Cleavage" evidence="3">
    <location>
        <begin position="175"/>
        <end position="176"/>
    </location>
</feature>
<feature type="site" description="Cleavage" evidence="3">
    <location>
        <begin position="419"/>
        <end position="420"/>
    </location>
</feature>
<feature type="site" description="Cleavage" evidence="2">
    <location>
        <begin position="664"/>
        <end position="665"/>
    </location>
</feature>
<feature type="site" description="Cleavage" evidence="3">
    <location>
        <begin position="755"/>
        <end position="756"/>
    </location>
</feature>
<feature type="modified residue" description="O-(5'-phospho-RNA)-tyrosine" evidence="7">
    <location>
        <position position="693"/>
    </location>
</feature>
<feature type="mutagenesis site" description="Complete loss of viral replication." evidence="5">
    <original>Y</original>
    <variation>A</variation>
    <location>
        <position position="693"/>
    </location>
</feature>
<feature type="mutagenesis site" description="No effect on viral replication." evidence="5">
    <original>Y</original>
    <variation>A</variation>
    <location>
        <position position="720"/>
    </location>
</feature>
<feature type="mutagenesis site" description="No effect on viral replication." evidence="5">
    <original>Y</original>
    <variation>A</variation>
    <location>
        <position position="723"/>
    </location>
</feature>
<feature type="mutagenesis site" description="No effect on viral replication." evidence="5">
    <original>Y</original>
    <variation>A</variation>
    <location>
        <position position="728"/>
    </location>
</feature>
<feature type="mutagenesis site" description="No effect on viral replication." evidence="5">
    <original>Y</original>
    <variation>A</variation>
    <location>
        <position position="729"/>
    </location>
</feature>
<feature type="mutagenesis site" description="No effect on viral replication." evidence="5">
    <original>Y</original>
    <variation>A</variation>
    <location>
        <position position="747"/>
    </location>
</feature>
<organismHost>
    <name type="scientific">Homo sapiens</name>
    <name type="common">Human</name>
    <dbReference type="NCBI Taxonomy" id="9606"/>
</organismHost>
<gene>
    <name type="primary">ORF1</name>
</gene>
<comment type="function">
    <molecule>Serine protease p27</molecule>
    <text evidence="2">Responsible for the cleavage of the polyprotein into functional products.</text>
</comment>
<comment type="function">
    <molecule>Viral genome-linked protein</molecule>
    <text evidence="5 7">Covalently attached to the 5' extremity of the genomic and subgenomic RNAs (PubMed:22787221). It may serve as a primer for the replicase (Probable).</text>
</comment>
<comment type="catalytic activity">
    <reaction>
        <text>RNA(n) + a ribonucleoside 5'-triphosphate = RNA(n+1) + diphosphate</text>
        <dbReference type="Rhea" id="RHEA:21248"/>
        <dbReference type="Rhea" id="RHEA-COMP:14527"/>
        <dbReference type="Rhea" id="RHEA-COMP:17342"/>
        <dbReference type="ChEBI" id="CHEBI:33019"/>
        <dbReference type="ChEBI" id="CHEBI:61557"/>
        <dbReference type="ChEBI" id="CHEBI:140395"/>
    </reaction>
</comment>
<comment type="subunit">
    <molecule>Serine protease p27</molecule>
    <text evidence="2">Monomer.</text>
</comment>
<comment type="subcellular location">
    <molecule>Transmembrane protein 1A</molecule>
    <subcellularLocation>
        <location evidence="6">Host membrane</location>
        <topology evidence="6">Multi-pass membrane protein</topology>
    </subcellularLocation>
</comment>
<comment type="alternative products">
    <event type="ribosomal frameshifting"/>
    <isoform>
        <id>Q3ZN07-1</id>
        <name>nsp1a</name>
        <sequence type="displayed"/>
    </isoform>
    <isoform>
        <id>Q3ZN06-1</id>
        <name>nsp1ab</name>
        <sequence type="external"/>
    </isoform>
</comment>
<comment type="PTM">
    <text evidence="2">Cleaved by the viral and host proteases (By similarity). The protease is probably autocatalytically cleaved (By similarity).</text>
</comment>
<comment type="PTM">
    <text>Cleaved presumably by viral and host proteases.</text>
</comment>
<comment type="similarity">
    <text evidence="6">Belongs to the astroviridae polyprotein 1A family.</text>
</comment>